<dbReference type="EMBL" id="AL513382">
    <property type="protein sequence ID" value="CAD02610.1"/>
    <property type="molecule type" value="Genomic_DNA"/>
</dbReference>
<dbReference type="EMBL" id="AE014613">
    <property type="protein sequence ID" value="AAO68328.1"/>
    <property type="molecule type" value="Genomic_DNA"/>
</dbReference>
<dbReference type="RefSeq" id="NP_456785.1">
    <property type="nucleotide sequence ID" value="NC_003198.1"/>
</dbReference>
<dbReference type="RefSeq" id="WP_001135904.1">
    <property type="nucleotide sequence ID" value="NZ_WSUR01000002.1"/>
</dbReference>
<dbReference type="SMR" id="Q8XEL6"/>
<dbReference type="STRING" id="220341.gene:17586365"/>
<dbReference type="KEGG" id="stt:t0627"/>
<dbReference type="KEGG" id="sty:STY2465"/>
<dbReference type="PATRIC" id="fig|220341.7.peg.2492"/>
<dbReference type="eggNOG" id="COG3082">
    <property type="taxonomic scope" value="Bacteria"/>
</dbReference>
<dbReference type="HOGENOM" id="CLU_175457_0_0_6"/>
<dbReference type="OMA" id="HQAPTDL"/>
<dbReference type="OrthoDB" id="5771474at2"/>
<dbReference type="Proteomes" id="UP000000541">
    <property type="component" value="Chromosome"/>
</dbReference>
<dbReference type="Proteomes" id="UP000002670">
    <property type="component" value="Chromosome"/>
</dbReference>
<dbReference type="Gene3D" id="1.10.3390.10">
    <property type="entry name" value="YejL-like"/>
    <property type="match status" value="1"/>
</dbReference>
<dbReference type="HAMAP" id="MF_00816">
    <property type="entry name" value="UPF0352"/>
    <property type="match status" value="1"/>
</dbReference>
<dbReference type="InterPro" id="IPR009857">
    <property type="entry name" value="UPF0352"/>
</dbReference>
<dbReference type="InterPro" id="IPR023202">
    <property type="entry name" value="YejL_sf"/>
</dbReference>
<dbReference type="NCBIfam" id="NF010242">
    <property type="entry name" value="PRK13689.1"/>
    <property type="match status" value="1"/>
</dbReference>
<dbReference type="Pfam" id="PF07208">
    <property type="entry name" value="DUF1414"/>
    <property type="match status" value="1"/>
</dbReference>
<dbReference type="PIRSF" id="PIRSF006188">
    <property type="entry name" value="UCP006188"/>
    <property type="match status" value="1"/>
</dbReference>
<dbReference type="SUPFAM" id="SSF158651">
    <property type="entry name" value="YejL-like"/>
    <property type="match status" value="1"/>
</dbReference>
<protein>
    <recommendedName>
        <fullName evidence="1">UPF0352 protein YejL</fullName>
    </recommendedName>
</protein>
<evidence type="ECO:0000255" key="1">
    <source>
        <dbReference type="HAMAP-Rule" id="MF_00816"/>
    </source>
</evidence>
<reference key="1">
    <citation type="journal article" date="2001" name="Nature">
        <title>Complete genome sequence of a multiple drug resistant Salmonella enterica serovar Typhi CT18.</title>
        <authorList>
            <person name="Parkhill J."/>
            <person name="Dougan G."/>
            <person name="James K.D."/>
            <person name="Thomson N.R."/>
            <person name="Pickard D."/>
            <person name="Wain J."/>
            <person name="Churcher C.M."/>
            <person name="Mungall K.L."/>
            <person name="Bentley S.D."/>
            <person name="Holden M.T.G."/>
            <person name="Sebaihia M."/>
            <person name="Baker S."/>
            <person name="Basham D."/>
            <person name="Brooks K."/>
            <person name="Chillingworth T."/>
            <person name="Connerton P."/>
            <person name="Cronin A."/>
            <person name="Davis P."/>
            <person name="Davies R.M."/>
            <person name="Dowd L."/>
            <person name="White N."/>
            <person name="Farrar J."/>
            <person name="Feltwell T."/>
            <person name="Hamlin N."/>
            <person name="Haque A."/>
            <person name="Hien T.T."/>
            <person name="Holroyd S."/>
            <person name="Jagels K."/>
            <person name="Krogh A."/>
            <person name="Larsen T.S."/>
            <person name="Leather S."/>
            <person name="Moule S."/>
            <person name="O'Gaora P."/>
            <person name="Parry C."/>
            <person name="Quail M.A."/>
            <person name="Rutherford K.M."/>
            <person name="Simmonds M."/>
            <person name="Skelton J."/>
            <person name="Stevens K."/>
            <person name="Whitehead S."/>
            <person name="Barrell B.G."/>
        </authorList>
    </citation>
    <scope>NUCLEOTIDE SEQUENCE [LARGE SCALE GENOMIC DNA]</scope>
    <source>
        <strain>CT18</strain>
    </source>
</reference>
<reference key="2">
    <citation type="journal article" date="2003" name="J. Bacteriol.">
        <title>Comparative genomics of Salmonella enterica serovar Typhi strains Ty2 and CT18.</title>
        <authorList>
            <person name="Deng W."/>
            <person name="Liou S.-R."/>
            <person name="Plunkett G. III"/>
            <person name="Mayhew G.F."/>
            <person name="Rose D.J."/>
            <person name="Burland V."/>
            <person name="Kodoyianni V."/>
            <person name="Schwartz D.C."/>
            <person name="Blattner F.R."/>
        </authorList>
    </citation>
    <scope>NUCLEOTIDE SEQUENCE [LARGE SCALE GENOMIC DNA]</scope>
    <source>
        <strain>ATCC 700931 / Ty2</strain>
    </source>
</reference>
<organism>
    <name type="scientific">Salmonella typhi</name>
    <dbReference type="NCBI Taxonomy" id="90370"/>
    <lineage>
        <taxon>Bacteria</taxon>
        <taxon>Pseudomonadati</taxon>
        <taxon>Pseudomonadota</taxon>
        <taxon>Gammaproteobacteria</taxon>
        <taxon>Enterobacterales</taxon>
        <taxon>Enterobacteriaceae</taxon>
        <taxon>Salmonella</taxon>
    </lineage>
</organism>
<proteinExistence type="inferred from homology"/>
<gene>
    <name evidence="1" type="primary">yejL</name>
    <name type="ordered locus">STY2465</name>
    <name type="ordered locus">t0627</name>
</gene>
<sequence>MPQLSRYSDEHVEQLLSELLSVLEKHKAPTDLSLMVLGNMVTNLINTSVAPAQRQAIANSFARALQSSISEDNAH</sequence>
<accession>Q8XEL6</accession>
<accession>Q7AMN2</accession>
<feature type="chain" id="PRO_0000201797" description="UPF0352 protein YejL">
    <location>
        <begin position="1"/>
        <end position="75"/>
    </location>
</feature>
<comment type="similarity">
    <text evidence="1">Belongs to the UPF0352 family.</text>
</comment>
<name>YEJL_SALTI</name>